<name>Y2183_ENT38</name>
<comment type="similarity">
    <text evidence="1">Belongs to the UPF0509 family.</text>
</comment>
<sequence length="60" mass="6573">MSEIDAQKVAQRIDTVLDILVAGDYHSAIRNLEILKSELLDHTNAGNTADSAQPKAPWEV</sequence>
<protein>
    <recommendedName>
        <fullName evidence="1">UPF0509 protein Ent638_2183</fullName>
    </recommendedName>
</protein>
<organism>
    <name type="scientific">Enterobacter sp. (strain 638)</name>
    <dbReference type="NCBI Taxonomy" id="399742"/>
    <lineage>
        <taxon>Bacteria</taxon>
        <taxon>Pseudomonadati</taxon>
        <taxon>Pseudomonadota</taxon>
        <taxon>Gammaproteobacteria</taxon>
        <taxon>Enterobacterales</taxon>
        <taxon>Enterobacteriaceae</taxon>
        <taxon>Enterobacter</taxon>
    </lineage>
</organism>
<evidence type="ECO:0000255" key="1">
    <source>
        <dbReference type="HAMAP-Rule" id="MF_01641"/>
    </source>
</evidence>
<feature type="chain" id="PRO_1000186849" description="UPF0509 protein Ent638_2183">
    <location>
        <begin position="1"/>
        <end position="60"/>
    </location>
</feature>
<gene>
    <name type="ordered locus">Ent638_2183</name>
</gene>
<reference key="1">
    <citation type="journal article" date="2010" name="PLoS Genet.">
        <title>Genome sequence of the plant growth promoting endophytic bacterium Enterobacter sp. 638.</title>
        <authorList>
            <person name="Taghavi S."/>
            <person name="van der Lelie D."/>
            <person name="Hoffman A."/>
            <person name="Zhang Y.B."/>
            <person name="Walla M.D."/>
            <person name="Vangronsveld J."/>
            <person name="Newman L."/>
            <person name="Monchy S."/>
        </authorList>
    </citation>
    <scope>NUCLEOTIDE SEQUENCE [LARGE SCALE GENOMIC DNA]</scope>
    <source>
        <strain>638</strain>
    </source>
</reference>
<proteinExistence type="inferred from homology"/>
<accession>A4WAX8</accession>
<dbReference type="EMBL" id="CP000653">
    <property type="protein sequence ID" value="ABP60858.1"/>
    <property type="molecule type" value="Genomic_DNA"/>
</dbReference>
<dbReference type="RefSeq" id="WP_012017573.1">
    <property type="nucleotide sequence ID" value="NC_009436.1"/>
</dbReference>
<dbReference type="SMR" id="A4WAX8"/>
<dbReference type="STRING" id="399742.Ent638_2183"/>
<dbReference type="KEGG" id="ent:Ent638_2183"/>
<dbReference type="eggNOG" id="ENOG5032YBK">
    <property type="taxonomic scope" value="Bacteria"/>
</dbReference>
<dbReference type="HOGENOM" id="CLU_180697_1_0_6"/>
<dbReference type="OrthoDB" id="6561755at2"/>
<dbReference type="Proteomes" id="UP000000230">
    <property type="component" value="Chromosome"/>
</dbReference>
<dbReference type="HAMAP" id="MF_01641">
    <property type="entry name" value="UPF0509"/>
    <property type="match status" value="1"/>
</dbReference>
<dbReference type="InterPro" id="IPR020887">
    <property type="entry name" value="UPF0509"/>
</dbReference>
<dbReference type="NCBIfam" id="NF010179">
    <property type="entry name" value="PRK13658.1"/>
    <property type="match status" value="1"/>
</dbReference>
<dbReference type="Pfam" id="PF23675">
    <property type="entry name" value="YciZ"/>
    <property type="match status" value="1"/>
</dbReference>